<dbReference type="EMBL" id="BC083654">
    <property type="protein sequence ID" value="AAH83654.1"/>
    <property type="molecule type" value="mRNA"/>
</dbReference>
<dbReference type="RefSeq" id="NP_001014119.1">
    <property type="nucleotide sequence ID" value="NM_001014097.2"/>
</dbReference>
<dbReference type="FunCoup" id="Q5XIM5">
    <property type="interactions" value="2785"/>
</dbReference>
<dbReference type="IntAct" id="Q5XIM5">
    <property type="interactions" value="9"/>
</dbReference>
<dbReference type="STRING" id="10116.ENSRNOP00000071373"/>
<dbReference type="iPTMnet" id="Q5XIM5"/>
<dbReference type="PhosphoSitePlus" id="Q5XIM5"/>
<dbReference type="jPOST" id="Q5XIM5"/>
<dbReference type="PaxDb" id="10116-ENSRNOP00000040675"/>
<dbReference type="Ensembl" id="ENSRNOT00000044956.3">
    <property type="protein sequence ID" value="ENSRNOP00000040675.2"/>
    <property type="gene ID" value="ENSRNOG00000010186.8"/>
</dbReference>
<dbReference type="GeneID" id="315970"/>
<dbReference type="KEGG" id="rno:315970"/>
<dbReference type="UCSC" id="RGD:1359113">
    <property type="organism name" value="rat"/>
</dbReference>
<dbReference type="AGR" id="RGD:1359113"/>
<dbReference type="CTD" id="55573"/>
<dbReference type="RGD" id="1359113">
    <property type="gene designation" value="Cdv3"/>
</dbReference>
<dbReference type="eggNOG" id="ENOG502QRFT">
    <property type="taxonomic scope" value="Eukaryota"/>
</dbReference>
<dbReference type="GeneTree" id="ENSGT00390000000805"/>
<dbReference type="InParanoid" id="Q5XIM5"/>
<dbReference type="OrthoDB" id="6288097at2759"/>
<dbReference type="PRO" id="PR:Q5XIM5"/>
<dbReference type="Proteomes" id="UP000002494">
    <property type="component" value="Chromosome 8"/>
</dbReference>
<dbReference type="Bgee" id="ENSRNOG00000010186">
    <property type="expression patterns" value="Expressed in testis and 18 other cell types or tissues"/>
</dbReference>
<dbReference type="ExpressionAtlas" id="Q5XIM5">
    <property type="expression patterns" value="baseline and differential"/>
</dbReference>
<dbReference type="GO" id="GO:0005737">
    <property type="term" value="C:cytoplasm"/>
    <property type="evidence" value="ECO:0000318"/>
    <property type="project" value="GO_Central"/>
</dbReference>
<dbReference type="InterPro" id="IPR026806">
    <property type="entry name" value="CDV3"/>
</dbReference>
<dbReference type="PANTHER" id="PTHR16284">
    <property type="entry name" value="PROTEIN CDV3 HOMOLOG"/>
    <property type="match status" value="1"/>
</dbReference>
<dbReference type="PANTHER" id="PTHR16284:SF13">
    <property type="entry name" value="PROTEIN CDV3 HOMOLOG"/>
    <property type="match status" value="1"/>
</dbReference>
<dbReference type="Pfam" id="PF15359">
    <property type="entry name" value="CDV3"/>
    <property type="match status" value="1"/>
</dbReference>
<accession>Q5XIM5</accession>
<name>CDV3_RAT</name>
<organism>
    <name type="scientific">Rattus norvegicus</name>
    <name type="common">Rat</name>
    <dbReference type="NCBI Taxonomy" id="10116"/>
    <lineage>
        <taxon>Eukaryota</taxon>
        <taxon>Metazoa</taxon>
        <taxon>Chordata</taxon>
        <taxon>Craniata</taxon>
        <taxon>Vertebrata</taxon>
        <taxon>Euteleostomi</taxon>
        <taxon>Mammalia</taxon>
        <taxon>Eutheria</taxon>
        <taxon>Euarchontoglires</taxon>
        <taxon>Glires</taxon>
        <taxon>Rodentia</taxon>
        <taxon>Myomorpha</taxon>
        <taxon>Muroidea</taxon>
        <taxon>Muridae</taxon>
        <taxon>Murinae</taxon>
        <taxon>Rattus</taxon>
    </lineage>
</organism>
<comment type="subcellular location">
    <subcellularLocation>
        <location evidence="1">Cytoplasm</location>
    </subcellularLocation>
</comment>
<comment type="similarity">
    <text evidence="5">Belongs to the CDV3 family.</text>
</comment>
<protein>
    <recommendedName>
        <fullName>Protein CDV3 homolog</fullName>
    </recommendedName>
</protein>
<keyword id="KW-0007">Acetylation</keyword>
<keyword id="KW-0963">Cytoplasm</keyword>
<keyword id="KW-0597">Phosphoprotein</keyword>
<keyword id="KW-1185">Reference proteome</keyword>
<proteinExistence type="evidence at protein level"/>
<feature type="initiator methionine" description="Removed" evidence="3">
    <location>
        <position position="1"/>
    </location>
</feature>
<feature type="chain" id="PRO_0000299562" description="Protein CDV3 homolog">
    <location>
        <begin position="2"/>
        <end position="236"/>
    </location>
</feature>
<feature type="region of interest" description="Disordered" evidence="4">
    <location>
        <begin position="1"/>
        <end position="236"/>
    </location>
</feature>
<feature type="compositionally biased region" description="Basic and acidic residues" evidence="4">
    <location>
        <begin position="1"/>
        <end position="15"/>
    </location>
</feature>
<feature type="compositionally biased region" description="Low complexity" evidence="4">
    <location>
        <begin position="27"/>
        <end position="45"/>
    </location>
</feature>
<feature type="compositionally biased region" description="Gly residues" evidence="4">
    <location>
        <begin position="46"/>
        <end position="100"/>
    </location>
</feature>
<feature type="compositionally biased region" description="Basic and acidic residues" evidence="4">
    <location>
        <begin position="103"/>
        <end position="119"/>
    </location>
</feature>
<feature type="compositionally biased region" description="Polar residues" evidence="4">
    <location>
        <begin position="214"/>
        <end position="225"/>
    </location>
</feature>
<feature type="compositionally biased region" description="Basic and acidic residues" evidence="4">
    <location>
        <begin position="226"/>
        <end position="236"/>
    </location>
</feature>
<feature type="modified residue" description="N-acetylalanine" evidence="3">
    <location>
        <position position="2"/>
    </location>
</feature>
<feature type="modified residue" description="Phosphothreonine" evidence="3">
    <location>
        <position position="4"/>
    </location>
</feature>
<feature type="modified residue" description="Phosphoserine" evidence="3">
    <location>
        <position position="8"/>
    </location>
</feature>
<feature type="modified residue" description="Phosphotyrosine" evidence="2">
    <location>
        <position position="120"/>
    </location>
</feature>
<feature type="modified residue" description="Phosphoserine" evidence="3">
    <location>
        <position position="131"/>
    </location>
</feature>
<feature type="modified residue" description="Phosphoserine" evidence="6">
    <location>
        <position position="155"/>
    </location>
</feature>
<feature type="modified residue" description="Phosphothreonine" evidence="3">
    <location>
        <position position="205"/>
    </location>
</feature>
<feature type="modified residue" description="Phosphotyrosine" evidence="2">
    <location>
        <position position="213"/>
    </location>
</feature>
<evidence type="ECO:0000250" key="1"/>
<evidence type="ECO:0000250" key="2">
    <source>
        <dbReference type="UniProtKB" id="Q4VAA2"/>
    </source>
</evidence>
<evidence type="ECO:0000250" key="3">
    <source>
        <dbReference type="UniProtKB" id="Q9UKY7"/>
    </source>
</evidence>
<evidence type="ECO:0000256" key="4">
    <source>
        <dbReference type="SAM" id="MobiDB-lite"/>
    </source>
</evidence>
<evidence type="ECO:0000305" key="5"/>
<evidence type="ECO:0007744" key="6">
    <source>
    </source>
</evidence>
<reference key="1">
    <citation type="journal article" date="2004" name="Genome Res.">
        <title>The status, quality, and expansion of the NIH full-length cDNA project: the Mammalian Gene Collection (MGC).</title>
        <authorList>
            <consortium name="The MGC Project Team"/>
        </authorList>
    </citation>
    <scope>NUCLEOTIDE SEQUENCE [LARGE SCALE MRNA]</scope>
    <source>
        <tissue>Testis</tissue>
    </source>
</reference>
<reference key="2">
    <citation type="journal article" date="2012" name="Nat. Commun.">
        <title>Quantitative maps of protein phosphorylation sites across 14 different rat organs and tissues.</title>
        <authorList>
            <person name="Lundby A."/>
            <person name="Secher A."/>
            <person name="Lage K."/>
            <person name="Nordsborg N.B."/>
            <person name="Dmytriyev A."/>
            <person name="Lundby C."/>
            <person name="Olsen J.V."/>
        </authorList>
    </citation>
    <scope>PHOSPHORYLATION [LARGE SCALE ANALYSIS] AT SER-155</scope>
    <scope>IDENTIFICATION BY MASS SPECTROMETRY [LARGE SCALE ANALYSIS]</scope>
</reference>
<sequence>MAETEERSLDNFFAKRDKKKKKERSSRAANAASGAGGSSAAAGSRPGDGGSLGSGARSGDGGSSGSGARSGDGGSLGSGARSGDGGTSRSGDGGSAGPGGKAITKDENEWKEFEQKEVDYSGLRVQAMQISEKEDDDNEKREDPGDNWEEGGGGSGAEKSSGPWNKTALVQAPPAPVTVTETPEPAMPSGVYRPPGARLTTTRKTPQGPPEIYSDTQFPSLQSTAKHVESRNRYLK</sequence>
<gene>
    <name type="primary">Cdv3</name>
</gene>